<protein>
    <recommendedName>
        <fullName evidence="1">Imidazoleglycerol-phosphate dehydratase</fullName>
        <shortName evidence="1">IGPD</shortName>
        <ecNumber evidence="1">4.2.1.19</ecNumber>
    </recommendedName>
</protein>
<keyword id="KW-0028">Amino-acid biosynthesis</keyword>
<keyword id="KW-0963">Cytoplasm</keyword>
<keyword id="KW-0368">Histidine biosynthesis</keyword>
<keyword id="KW-0456">Lyase</keyword>
<comment type="catalytic activity">
    <reaction evidence="1">
        <text>D-erythro-1-(imidazol-4-yl)glycerol 3-phosphate = 3-(imidazol-4-yl)-2-oxopropyl phosphate + H2O</text>
        <dbReference type="Rhea" id="RHEA:11040"/>
        <dbReference type="ChEBI" id="CHEBI:15377"/>
        <dbReference type="ChEBI" id="CHEBI:57766"/>
        <dbReference type="ChEBI" id="CHEBI:58278"/>
        <dbReference type="EC" id="4.2.1.19"/>
    </reaction>
</comment>
<comment type="pathway">
    <text evidence="1">Amino-acid biosynthesis; L-histidine biosynthesis; L-histidine from 5-phospho-alpha-D-ribose 1-diphosphate: step 6/9.</text>
</comment>
<comment type="subcellular location">
    <subcellularLocation>
        <location evidence="1">Cytoplasm</location>
    </subcellularLocation>
</comment>
<comment type="similarity">
    <text evidence="1">Belongs to the imidazoleglycerol-phosphate dehydratase family.</text>
</comment>
<accession>Q6G5Z9</accession>
<evidence type="ECO:0000255" key="1">
    <source>
        <dbReference type="HAMAP-Rule" id="MF_00076"/>
    </source>
</evidence>
<proteinExistence type="inferred from homology"/>
<gene>
    <name evidence="1" type="primary">hisB</name>
    <name type="ordered locus">SAS2561</name>
</gene>
<name>HIS7_STAAS</name>
<organism>
    <name type="scientific">Staphylococcus aureus (strain MSSA476)</name>
    <dbReference type="NCBI Taxonomy" id="282459"/>
    <lineage>
        <taxon>Bacteria</taxon>
        <taxon>Bacillati</taxon>
        <taxon>Bacillota</taxon>
        <taxon>Bacilli</taxon>
        <taxon>Bacillales</taxon>
        <taxon>Staphylococcaceae</taxon>
        <taxon>Staphylococcus</taxon>
    </lineage>
</organism>
<sequence length="192" mass="21456">MIYQKQRNTAETQLNISISDDQSPSHINTGVGFLNHMLTLFTFHSGLSLNIEAQGDIDVDDHHVTEDIGIVIGQLLLEMIKDKKHFVRYGTMYIPMDETLARVVVDISGRPYLSFNASLSKEKVGTFDTELVEEFFRAVVINARLTTHIDLIRGGNTHHEIEAIFKAFSRALGIALTATDDQRVPSSKGVIE</sequence>
<reference key="1">
    <citation type="journal article" date="2004" name="Proc. Natl. Acad. Sci. U.S.A.">
        <title>Complete genomes of two clinical Staphylococcus aureus strains: evidence for the rapid evolution of virulence and drug resistance.</title>
        <authorList>
            <person name="Holden M.T.G."/>
            <person name="Feil E.J."/>
            <person name="Lindsay J.A."/>
            <person name="Peacock S.J."/>
            <person name="Day N.P.J."/>
            <person name="Enright M.C."/>
            <person name="Foster T.J."/>
            <person name="Moore C.E."/>
            <person name="Hurst L."/>
            <person name="Atkin R."/>
            <person name="Barron A."/>
            <person name="Bason N."/>
            <person name="Bentley S.D."/>
            <person name="Chillingworth C."/>
            <person name="Chillingworth T."/>
            <person name="Churcher C."/>
            <person name="Clark L."/>
            <person name="Corton C."/>
            <person name="Cronin A."/>
            <person name="Doggett J."/>
            <person name="Dowd L."/>
            <person name="Feltwell T."/>
            <person name="Hance Z."/>
            <person name="Harris B."/>
            <person name="Hauser H."/>
            <person name="Holroyd S."/>
            <person name="Jagels K."/>
            <person name="James K.D."/>
            <person name="Lennard N."/>
            <person name="Line A."/>
            <person name="Mayes R."/>
            <person name="Moule S."/>
            <person name="Mungall K."/>
            <person name="Ormond D."/>
            <person name="Quail M.A."/>
            <person name="Rabbinowitsch E."/>
            <person name="Rutherford K.M."/>
            <person name="Sanders M."/>
            <person name="Sharp S."/>
            <person name="Simmonds M."/>
            <person name="Stevens K."/>
            <person name="Whitehead S."/>
            <person name="Barrell B.G."/>
            <person name="Spratt B.G."/>
            <person name="Parkhill J."/>
        </authorList>
    </citation>
    <scope>NUCLEOTIDE SEQUENCE [LARGE SCALE GENOMIC DNA]</scope>
    <source>
        <strain>MSSA476</strain>
    </source>
</reference>
<feature type="chain" id="PRO_0000158169" description="Imidazoleglycerol-phosphate dehydratase">
    <location>
        <begin position="1"/>
        <end position="192"/>
    </location>
</feature>
<dbReference type="EC" id="4.2.1.19" evidence="1"/>
<dbReference type="EMBL" id="BX571857">
    <property type="protein sequence ID" value="CAG44378.1"/>
    <property type="molecule type" value="Genomic_DNA"/>
</dbReference>
<dbReference type="RefSeq" id="WP_000640266.1">
    <property type="nucleotide sequence ID" value="NC_002953.3"/>
</dbReference>
<dbReference type="SMR" id="Q6G5Z9"/>
<dbReference type="KEGG" id="sas:SAS2561"/>
<dbReference type="HOGENOM" id="CLU_044308_3_0_9"/>
<dbReference type="UniPathway" id="UPA00031">
    <property type="reaction ID" value="UER00011"/>
</dbReference>
<dbReference type="GO" id="GO:0005737">
    <property type="term" value="C:cytoplasm"/>
    <property type="evidence" value="ECO:0007669"/>
    <property type="project" value="UniProtKB-SubCell"/>
</dbReference>
<dbReference type="GO" id="GO:0004424">
    <property type="term" value="F:imidazoleglycerol-phosphate dehydratase activity"/>
    <property type="evidence" value="ECO:0007669"/>
    <property type="project" value="UniProtKB-UniRule"/>
</dbReference>
<dbReference type="GO" id="GO:0000105">
    <property type="term" value="P:L-histidine biosynthetic process"/>
    <property type="evidence" value="ECO:0007669"/>
    <property type="project" value="UniProtKB-UniRule"/>
</dbReference>
<dbReference type="CDD" id="cd07914">
    <property type="entry name" value="IGPD"/>
    <property type="match status" value="1"/>
</dbReference>
<dbReference type="FunFam" id="3.30.230.40:FF:000001">
    <property type="entry name" value="Imidazoleglycerol-phosphate dehydratase HisB"/>
    <property type="match status" value="1"/>
</dbReference>
<dbReference type="FunFam" id="3.30.230.40:FF:000003">
    <property type="entry name" value="Imidazoleglycerol-phosphate dehydratase HisB"/>
    <property type="match status" value="1"/>
</dbReference>
<dbReference type="Gene3D" id="3.30.230.40">
    <property type="entry name" value="Imidazole glycerol phosphate dehydratase, domain 1"/>
    <property type="match status" value="2"/>
</dbReference>
<dbReference type="HAMAP" id="MF_00076">
    <property type="entry name" value="HisB"/>
    <property type="match status" value="1"/>
</dbReference>
<dbReference type="InterPro" id="IPR038494">
    <property type="entry name" value="IGPD_sf"/>
</dbReference>
<dbReference type="InterPro" id="IPR000807">
    <property type="entry name" value="ImidazoleglycerolP_deHydtase"/>
</dbReference>
<dbReference type="InterPro" id="IPR020565">
    <property type="entry name" value="ImidazoleglycerP_deHydtase_CS"/>
</dbReference>
<dbReference type="InterPro" id="IPR020568">
    <property type="entry name" value="Ribosomal_Su5_D2-typ_SF"/>
</dbReference>
<dbReference type="NCBIfam" id="NF002107">
    <property type="entry name" value="PRK00951.1-2"/>
    <property type="match status" value="1"/>
</dbReference>
<dbReference type="NCBIfam" id="NF002111">
    <property type="entry name" value="PRK00951.2-1"/>
    <property type="match status" value="1"/>
</dbReference>
<dbReference type="NCBIfam" id="NF002114">
    <property type="entry name" value="PRK00951.2-4"/>
    <property type="match status" value="1"/>
</dbReference>
<dbReference type="PANTHER" id="PTHR23133:SF2">
    <property type="entry name" value="IMIDAZOLEGLYCEROL-PHOSPHATE DEHYDRATASE"/>
    <property type="match status" value="1"/>
</dbReference>
<dbReference type="PANTHER" id="PTHR23133">
    <property type="entry name" value="IMIDAZOLEGLYCEROL-PHOSPHATE DEHYDRATASE HIS7"/>
    <property type="match status" value="1"/>
</dbReference>
<dbReference type="Pfam" id="PF00475">
    <property type="entry name" value="IGPD"/>
    <property type="match status" value="1"/>
</dbReference>
<dbReference type="SUPFAM" id="SSF54211">
    <property type="entry name" value="Ribosomal protein S5 domain 2-like"/>
    <property type="match status" value="2"/>
</dbReference>
<dbReference type="PROSITE" id="PS00954">
    <property type="entry name" value="IGP_DEHYDRATASE_1"/>
    <property type="match status" value="1"/>
</dbReference>
<dbReference type="PROSITE" id="PS00955">
    <property type="entry name" value="IGP_DEHYDRATASE_2"/>
    <property type="match status" value="1"/>
</dbReference>